<proteinExistence type="evidence at protein level"/>
<dbReference type="EMBL" id="M97388">
    <property type="protein sequence ID" value="AAA58442.1"/>
    <property type="molecule type" value="mRNA"/>
</dbReference>
<dbReference type="EMBL" id="BT006972">
    <property type="protein sequence ID" value="AAP35618.1"/>
    <property type="molecule type" value="mRNA"/>
</dbReference>
<dbReference type="EMBL" id="AL137159">
    <property type="status" value="NOT_ANNOTATED_CDS"/>
    <property type="molecule type" value="Genomic_DNA"/>
</dbReference>
<dbReference type="EMBL" id="BC002809">
    <property type="protein sequence ID" value="AAH02809.1"/>
    <property type="molecule type" value="mRNA"/>
</dbReference>
<dbReference type="EMBL" id="BC035507">
    <property type="protein sequence ID" value="AAH35507.1"/>
    <property type="molecule type" value="mRNA"/>
</dbReference>
<dbReference type="EMBL" id="BC068553">
    <property type="protein sequence ID" value="AAH68553.1"/>
    <property type="molecule type" value="mRNA"/>
</dbReference>
<dbReference type="CCDS" id="CCDS744.1"/>
<dbReference type="PIR" id="A43320">
    <property type="entry name" value="A43320"/>
</dbReference>
<dbReference type="RefSeq" id="NP_001929.1">
    <property type="nucleotide sequence ID" value="NM_001938.3"/>
</dbReference>
<dbReference type="PDB" id="1JFI">
    <property type="method" value="X-ray"/>
    <property type="resolution" value="2.62 A"/>
    <property type="chains" value="B=1-176"/>
</dbReference>
<dbReference type="PDBsum" id="1JFI"/>
<dbReference type="SMR" id="Q01658"/>
<dbReference type="BioGRID" id="108144">
    <property type="interactions" value="83"/>
</dbReference>
<dbReference type="ComplexPortal" id="CPX-1004">
    <property type="entry name" value="PCAF-containing ATAC complex"/>
</dbReference>
<dbReference type="ComplexPortal" id="CPX-642">
    <property type="entry name" value="Negative cofactor 2 transcriptional regulator complex"/>
</dbReference>
<dbReference type="ComplexPortal" id="CPX-997">
    <property type="entry name" value="GCN5-containing ATAC complex"/>
</dbReference>
<dbReference type="CORUM" id="Q01658"/>
<dbReference type="FunCoup" id="Q01658">
    <property type="interactions" value="2702"/>
</dbReference>
<dbReference type="IntAct" id="Q01658">
    <property type="interactions" value="101"/>
</dbReference>
<dbReference type="MINT" id="Q01658"/>
<dbReference type="STRING" id="9606.ENSP00000359295"/>
<dbReference type="GlyGen" id="Q01658">
    <property type="glycosylation" value="1 site, 1 O-linked glycan (1 site)"/>
</dbReference>
<dbReference type="iPTMnet" id="Q01658"/>
<dbReference type="PhosphoSitePlus" id="Q01658"/>
<dbReference type="BioMuta" id="DR1"/>
<dbReference type="DMDM" id="401162"/>
<dbReference type="jPOST" id="Q01658"/>
<dbReference type="MassIVE" id="Q01658"/>
<dbReference type="PaxDb" id="9606-ENSP00000359295"/>
<dbReference type="PeptideAtlas" id="Q01658"/>
<dbReference type="ProteomicsDB" id="57979"/>
<dbReference type="Pumba" id="Q01658"/>
<dbReference type="Antibodypedia" id="19942">
    <property type="antibodies" value="202 antibodies from 31 providers"/>
</dbReference>
<dbReference type="DNASU" id="1810"/>
<dbReference type="Ensembl" id="ENST00000370267.1">
    <property type="protein sequence ID" value="ENSP00000359290.1"/>
    <property type="gene ID" value="ENSG00000117505.13"/>
</dbReference>
<dbReference type="Ensembl" id="ENST00000370272.9">
    <property type="protein sequence ID" value="ENSP00000359295.3"/>
    <property type="gene ID" value="ENSG00000117505.13"/>
</dbReference>
<dbReference type="GeneID" id="1810"/>
<dbReference type="KEGG" id="hsa:1810"/>
<dbReference type="MANE-Select" id="ENST00000370272.9">
    <property type="protein sequence ID" value="ENSP00000359295.3"/>
    <property type="RefSeq nucleotide sequence ID" value="NM_001938.3"/>
    <property type="RefSeq protein sequence ID" value="NP_001929.1"/>
</dbReference>
<dbReference type="AGR" id="HGNC:3017"/>
<dbReference type="CTD" id="1810"/>
<dbReference type="DisGeNET" id="1810"/>
<dbReference type="GeneCards" id="DR1"/>
<dbReference type="HGNC" id="HGNC:3017">
    <property type="gene designation" value="DR1"/>
</dbReference>
<dbReference type="HPA" id="ENSG00000117505">
    <property type="expression patterns" value="Low tissue specificity"/>
</dbReference>
<dbReference type="MIM" id="601482">
    <property type="type" value="gene"/>
</dbReference>
<dbReference type="neXtProt" id="NX_Q01658"/>
<dbReference type="OpenTargets" id="ENSG00000117505"/>
<dbReference type="PharmGKB" id="PA27475"/>
<dbReference type="VEuPathDB" id="HostDB:ENSG00000117505"/>
<dbReference type="eggNOG" id="KOG0871">
    <property type="taxonomic scope" value="Eukaryota"/>
</dbReference>
<dbReference type="GeneTree" id="ENSGT00550000075010"/>
<dbReference type="HOGENOM" id="CLU_066247_11_1_1"/>
<dbReference type="InParanoid" id="Q01658"/>
<dbReference type="OMA" id="RDAKFKK"/>
<dbReference type="OrthoDB" id="601405at2759"/>
<dbReference type="PAN-GO" id="Q01658">
    <property type="GO annotations" value="7 GO annotations based on evolutionary models"/>
</dbReference>
<dbReference type="PhylomeDB" id="Q01658"/>
<dbReference type="TreeFam" id="TF317588"/>
<dbReference type="PathwayCommons" id="Q01658"/>
<dbReference type="Reactome" id="R-HSA-3214847">
    <property type="pathway name" value="HATs acetylate histones"/>
</dbReference>
<dbReference type="Reactome" id="R-HSA-9772755">
    <property type="pathway name" value="Formation of WDR5-containing histone-modifying complexes"/>
</dbReference>
<dbReference type="SignaLink" id="Q01658"/>
<dbReference type="SIGNOR" id="Q01658"/>
<dbReference type="BioGRID-ORCS" id="1810">
    <property type="hits" value="594 hits in 1184 CRISPR screens"/>
</dbReference>
<dbReference type="ChiTaRS" id="DR1">
    <property type="organism name" value="human"/>
</dbReference>
<dbReference type="EvolutionaryTrace" id="Q01658"/>
<dbReference type="GeneWiki" id="DR1_(gene)"/>
<dbReference type="GenomeRNAi" id="1810"/>
<dbReference type="Pharos" id="Q01658">
    <property type="development level" value="Tbio"/>
</dbReference>
<dbReference type="PRO" id="PR:Q01658"/>
<dbReference type="Proteomes" id="UP000005640">
    <property type="component" value="Chromosome 1"/>
</dbReference>
<dbReference type="RNAct" id="Q01658">
    <property type="molecule type" value="protein"/>
</dbReference>
<dbReference type="Bgee" id="ENSG00000117505">
    <property type="expression patterns" value="Expressed in choroid plexus epithelium and 218 other cell types or tissues"/>
</dbReference>
<dbReference type="ExpressionAtlas" id="Q01658">
    <property type="expression patterns" value="baseline and differential"/>
</dbReference>
<dbReference type="GO" id="GO:0140672">
    <property type="term" value="C:ATAC complex"/>
    <property type="evidence" value="ECO:0000314"/>
    <property type="project" value="BHF-UCL"/>
</dbReference>
<dbReference type="GO" id="GO:0072686">
    <property type="term" value="C:mitotic spindle"/>
    <property type="evidence" value="ECO:0000303"/>
    <property type="project" value="ComplexPortal"/>
</dbReference>
<dbReference type="GO" id="GO:0017054">
    <property type="term" value="C:negative cofactor 2 complex"/>
    <property type="evidence" value="ECO:0000318"/>
    <property type="project" value="GO_Central"/>
</dbReference>
<dbReference type="GO" id="GO:0005654">
    <property type="term" value="C:nucleoplasm"/>
    <property type="evidence" value="ECO:0000314"/>
    <property type="project" value="HPA"/>
</dbReference>
<dbReference type="GO" id="GO:0090575">
    <property type="term" value="C:RNA polymerase II transcription regulator complex"/>
    <property type="evidence" value="ECO:0000314"/>
    <property type="project" value="ARUK-UCL"/>
</dbReference>
<dbReference type="GO" id="GO:0003677">
    <property type="term" value="F:DNA binding"/>
    <property type="evidence" value="ECO:0007669"/>
    <property type="project" value="UniProtKB-KW"/>
</dbReference>
<dbReference type="GO" id="GO:0046982">
    <property type="term" value="F:protein heterodimerization activity"/>
    <property type="evidence" value="ECO:0007669"/>
    <property type="project" value="InterPro"/>
</dbReference>
<dbReference type="GO" id="GO:0016251">
    <property type="term" value="F:RNA polymerase II general transcription initiation factor activity"/>
    <property type="evidence" value="ECO:0000314"/>
    <property type="project" value="ARUK-UCL"/>
</dbReference>
<dbReference type="GO" id="GO:0017025">
    <property type="term" value="F:TBP-class protein binding"/>
    <property type="evidence" value="ECO:0000314"/>
    <property type="project" value="BHF-UCL"/>
</dbReference>
<dbReference type="GO" id="GO:0000122">
    <property type="term" value="P:negative regulation of transcription by RNA polymerase II"/>
    <property type="evidence" value="ECO:0000314"/>
    <property type="project" value="BHF-UCL"/>
</dbReference>
<dbReference type="GO" id="GO:0051726">
    <property type="term" value="P:regulation of cell cycle"/>
    <property type="evidence" value="ECO:0000315"/>
    <property type="project" value="ComplexPortal"/>
</dbReference>
<dbReference type="GO" id="GO:0051302">
    <property type="term" value="P:regulation of cell division"/>
    <property type="evidence" value="ECO:0000314"/>
    <property type="project" value="ComplexPortal"/>
</dbReference>
<dbReference type="GO" id="GO:0006355">
    <property type="term" value="P:regulation of DNA-templated transcription"/>
    <property type="evidence" value="ECO:0000315"/>
    <property type="project" value="ComplexPortal"/>
</dbReference>
<dbReference type="GO" id="GO:0045995">
    <property type="term" value="P:regulation of embryonic development"/>
    <property type="evidence" value="ECO:0000266"/>
    <property type="project" value="ComplexPortal"/>
</dbReference>
<dbReference type="GO" id="GO:0006357">
    <property type="term" value="P:regulation of transcription by RNA polymerase II"/>
    <property type="evidence" value="ECO:0000314"/>
    <property type="project" value="ComplexPortal"/>
</dbReference>
<dbReference type="GO" id="GO:0051123">
    <property type="term" value="P:RNA polymerase II preinitiation complex assembly"/>
    <property type="evidence" value="ECO:0000318"/>
    <property type="project" value="GO_Central"/>
</dbReference>
<dbReference type="CDD" id="cd22905">
    <property type="entry name" value="HFD_Dr1"/>
    <property type="match status" value="1"/>
</dbReference>
<dbReference type="FunFam" id="1.10.20.10:FF:000019">
    <property type="entry name" value="Negative cofactor 2 beta"/>
    <property type="match status" value="1"/>
</dbReference>
<dbReference type="Gene3D" id="1.10.20.10">
    <property type="entry name" value="Histone, subunit A"/>
    <property type="match status" value="1"/>
</dbReference>
<dbReference type="IDEAL" id="IID00206"/>
<dbReference type="InterPro" id="IPR003958">
    <property type="entry name" value="CBFA_NFYB_domain"/>
</dbReference>
<dbReference type="InterPro" id="IPR009072">
    <property type="entry name" value="Histone-fold"/>
</dbReference>
<dbReference type="InterPro" id="IPR042225">
    <property type="entry name" value="Ncb2"/>
</dbReference>
<dbReference type="PANTHER" id="PTHR46138">
    <property type="entry name" value="PROTEIN DR1"/>
    <property type="match status" value="1"/>
</dbReference>
<dbReference type="PANTHER" id="PTHR46138:SF1">
    <property type="entry name" value="PROTEIN DR1"/>
    <property type="match status" value="1"/>
</dbReference>
<dbReference type="Pfam" id="PF00808">
    <property type="entry name" value="CBFD_NFYB_HMF"/>
    <property type="match status" value="1"/>
</dbReference>
<dbReference type="PRINTS" id="PR00615">
    <property type="entry name" value="CCAATSUBUNTA"/>
</dbReference>
<dbReference type="SUPFAM" id="SSF47113">
    <property type="entry name" value="Histone-fold"/>
    <property type="match status" value="1"/>
</dbReference>
<name>NC2B_HUMAN</name>
<evidence type="ECO:0000255" key="1"/>
<evidence type="ECO:0000256" key="2">
    <source>
        <dbReference type="SAM" id="MobiDB-lite"/>
    </source>
</evidence>
<evidence type="ECO:0000269" key="3">
    <source>
    </source>
</evidence>
<evidence type="ECO:0000269" key="4">
    <source>
    </source>
</evidence>
<evidence type="ECO:0000269" key="5">
    <source>
    </source>
</evidence>
<evidence type="ECO:0000269" key="6">
    <source>
    </source>
</evidence>
<evidence type="ECO:0000305" key="7"/>
<evidence type="ECO:0007744" key="8">
    <source>
    </source>
</evidence>
<evidence type="ECO:0007744" key="9">
    <source>
    </source>
</evidence>
<evidence type="ECO:0007744" key="10">
    <source>
    </source>
</evidence>
<evidence type="ECO:0007744" key="11">
    <source>
    </source>
</evidence>
<evidence type="ECO:0007829" key="12">
    <source>
        <dbReference type="PDB" id="1JFI"/>
    </source>
</evidence>
<reference key="1">
    <citation type="journal article" date="1992" name="Cell">
        <title>Dr1, a TATA-binding protein-associated phosphoprotein and inhibitor of class II gene transcription.</title>
        <authorList>
            <person name="Inostroza J.A."/>
            <person name="Mermelstein F.H."/>
            <person name="Ha I."/>
            <person name="Lane W.S."/>
            <person name="Reinberg D."/>
        </authorList>
    </citation>
    <scope>NUCLEOTIDE SEQUENCE [MRNA]</scope>
    <scope>PARTIAL PROTEIN SEQUENCE</scope>
</reference>
<reference key="2">
    <citation type="submission" date="2003-05" db="EMBL/GenBank/DDBJ databases">
        <title>Cloning of human full-length CDSs in BD Creator(TM) system donor vector.</title>
        <authorList>
            <person name="Kalnine N."/>
            <person name="Chen X."/>
            <person name="Rolfs A."/>
            <person name="Halleck A."/>
            <person name="Hines L."/>
            <person name="Eisenstein S."/>
            <person name="Koundinya M."/>
            <person name="Raphael J."/>
            <person name="Moreira D."/>
            <person name="Kelley T."/>
            <person name="LaBaer J."/>
            <person name="Lin Y."/>
            <person name="Phelan M."/>
            <person name="Farmer A."/>
        </authorList>
    </citation>
    <scope>NUCLEOTIDE SEQUENCE [LARGE SCALE MRNA]</scope>
</reference>
<reference key="3">
    <citation type="journal article" date="2006" name="Nature">
        <title>The DNA sequence and biological annotation of human chromosome 1.</title>
        <authorList>
            <person name="Gregory S.G."/>
            <person name="Barlow K.F."/>
            <person name="McLay K.E."/>
            <person name="Kaul R."/>
            <person name="Swarbreck D."/>
            <person name="Dunham A."/>
            <person name="Scott C.E."/>
            <person name="Howe K.L."/>
            <person name="Woodfine K."/>
            <person name="Spencer C.C.A."/>
            <person name="Jones M.C."/>
            <person name="Gillson C."/>
            <person name="Searle S."/>
            <person name="Zhou Y."/>
            <person name="Kokocinski F."/>
            <person name="McDonald L."/>
            <person name="Evans R."/>
            <person name="Phillips K."/>
            <person name="Atkinson A."/>
            <person name="Cooper R."/>
            <person name="Jones C."/>
            <person name="Hall R.E."/>
            <person name="Andrews T.D."/>
            <person name="Lloyd C."/>
            <person name="Ainscough R."/>
            <person name="Almeida J.P."/>
            <person name="Ambrose K.D."/>
            <person name="Anderson F."/>
            <person name="Andrew R.W."/>
            <person name="Ashwell R.I.S."/>
            <person name="Aubin K."/>
            <person name="Babbage A.K."/>
            <person name="Bagguley C.L."/>
            <person name="Bailey J."/>
            <person name="Beasley H."/>
            <person name="Bethel G."/>
            <person name="Bird C.P."/>
            <person name="Bray-Allen S."/>
            <person name="Brown J.Y."/>
            <person name="Brown A.J."/>
            <person name="Buckley D."/>
            <person name="Burton J."/>
            <person name="Bye J."/>
            <person name="Carder C."/>
            <person name="Chapman J.C."/>
            <person name="Clark S.Y."/>
            <person name="Clarke G."/>
            <person name="Clee C."/>
            <person name="Cobley V."/>
            <person name="Collier R.E."/>
            <person name="Corby N."/>
            <person name="Coville G.J."/>
            <person name="Davies J."/>
            <person name="Deadman R."/>
            <person name="Dunn M."/>
            <person name="Earthrowl M."/>
            <person name="Ellington A.G."/>
            <person name="Errington H."/>
            <person name="Frankish A."/>
            <person name="Frankland J."/>
            <person name="French L."/>
            <person name="Garner P."/>
            <person name="Garnett J."/>
            <person name="Gay L."/>
            <person name="Ghori M.R.J."/>
            <person name="Gibson R."/>
            <person name="Gilby L.M."/>
            <person name="Gillett W."/>
            <person name="Glithero R.J."/>
            <person name="Grafham D.V."/>
            <person name="Griffiths C."/>
            <person name="Griffiths-Jones S."/>
            <person name="Grocock R."/>
            <person name="Hammond S."/>
            <person name="Harrison E.S.I."/>
            <person name="Hart E."/>
            <person name="Haugen E."/>
            <person name="Heath P.D."/>
            <person name="Holmes S."/>
            <person name="Holt K."/>
            <person name="Howden P.J."/>
            <person name="Hunt A.R."/>
            <person name="Hunt S.E."/>
            <person name="Hunter G."/>
            <person name="Isherwood J."/>
            <person name="James R."/>
            <person name="Johnson C."/>
            <person name="Johnson D."/>
            <person name="Joy A."/>
            <person name="Kay M."/>
            <person name="Kershaw J.K."/>
            <person name="Kibukawa M."/>
            <person name="Kimberley A.M."/>
            <person name="King A."/>
            <person name="Knights A.J."/>
            <person name="Lad H."/>
            <person name="Laird G."/>
            <person name="Lawlor S."/>
            <person name="Leongamornlert D.A."/>
            <person name="Lloyd D.M."/>
            <person name="Loveland J."/>
            <person name="Lovell J."/>
            <person name="Lush M.J."/>
            <person name="Lyne R."/>
            <person name="Martin S."/>
            <person name="Mashreghi-Mohammadi M."/>
            <person name="Matthews L."/>
            <person name="Matthews N.S.W."/>
            <person name="McLaren S."/>
            <person name="Milne S."/>
            <person name="Mistry S."/>
            <person name="Moore M.J.F."/>
            <person name="Nickerson T."/>
            <person name="O'Dell C.N."/>
            <person name="Oliver K."/>
            <person name="Palmeiri A."/>
            <person name="Palmer S.A."/>
            <person name="Parker A."/>
            <person name="Patel D."/>
            <person name="Pearce A.V."/>
            <person name="Peck A.I."/>
            <person name="Pelan S."/>
            <person name="Phelps K."/>
            <person name="Phillimore B.J."/>
            <person name="Plumb R."/>
            <person name="Rajan J."/>
            <person name="Raymond C."/>
            <person name="Rouse G."/>
            <person name="Saenphimmachak C."/>
            <person name="Sehra H.K."/>
            <person name="Sheridan E."/>
            <person name="Shownkeen R."/>
            <person name="Sims S."/>
            <person name="Skuce C.D."/>
            <person name="Smith M."/>
            <person name="Steward C."/>
            <person name="Subramanian S."/>
            <person name="Sycamore N."/>
            <person name="Tracey A."/>
            <person name="Tromans A."/>
            <person name="Van Helmond Z."/>
            <person name="Wall M."/>
            <person name="Wallis J.M."/>
            <person name="White S."/>
            <person name="Whitehead S.L."/>
            <person name="Wilkinson J.E."/>
            <person name="Willey D.L."/>
            <person name="Williams H."/>
            <person name="Wilming L."/>
            <person name="Wray P.W."/>
            <person name="Wu Z."/>
            <person name="Coulson A."/>
            <person name="Vaudin M."/>
            <person name="Sulston J.E."/>
            <person name="Durbin R.M."/>
            <person name="Hubbard T."/>
            <person name="Wooster R."/>
            <person name="Dunham I."/>
            <person name="Carter N.P."/>
            <person name="McVean G."/>
            <person name="Ross M.T."/>
            <person name="Harrow J."/>
            <person name="Olson M.V."/>
            <person name="Beck S."/>
            <person name="Rogers J."/>
            <person name="Bentley D.R."/>
        </authorList>
    </citation>
    <scope>NUCLEOTIDE SEQUENCE [LARGE SCALE GENOMIC DNA]</scope>
</reference>
<reference key="4">
    <citation type="journal article" date="2004" name="Genome Res.">
        <title>The status, quality, and expansion of the NIH full-length cDNA project: the Mammalian Gene Collection (MGC).</title>
        <authorList>
            <consortium name="The MGC Project Team"/>
        </authorList>
    </citation>
    <scope>NUCLEOTIDE SEQUENCE [LARGE SCALE MRNA]</scope>
    <source>
        <tissue>Lymph</tissue>
        <tissue>Testis</tissue>
        <tissue>Uterus</tissue>
    </source>
</reference>
<reference key="5">
    <citation type="journal article" date="1996" name="EMBO J.">
        <title>A mechanism for repression of class II gene transcription through specific binding of NC2 to TBP-promoter complexes via heterodimeric histone fold domains.</title>
        <authorList>
            <person name="Goppelt A.R."/>
            <person name="Stelzer G."/>
            <person name="Lottspeich F."/>
            <person name="Meisterernst M."/>
        </authorList>
    </citation>
    <scope>FUNCTION</scope>
    <scope>INTERACTION WITH DRAP1</scope>
</reference>
<reference key="6">
    <citation type="journal article" date="1996" name="Nucleic Acids Res.">
        <title>Protein-protein interaction between the transcriptional repressor E4BP4 and the TBP-binding protein Dr1.</title>
        <authorList>
            <person name="Cowell I.G."/>
            <person name="Hurst H.C."/>
        </authorList>
    </citation>
    <scope>INTERACTION WITH NFIL3</scope>
</reference>
<reference key="7">
    <citation type="journal article" date="2008" name="Proc. Natl. Acad. Sci. U.S.A.">
        <title>A quantitative atlas of mitotic phosphorylation.</title>
        <authorList>
            <person name="Dephoure N."/>
            <person name="Zhou C."/>
            <person name="Villen J."/>
            <person name="Beausoleil S.A."/>
            <person name="Bakalarski C.E."/>
            <person name="Elledge S.J."/>
            <person name="Gygi S.P."/>
        </authorList>
    </citation>
    <scope>PHOSPHORYLATION [LARGE SCALE ANALYSIS] AT SER-166 AND SER-167</scope>
    <scope>IDENTIFICATION BY MASS SPECTROMETRY [LARGE SCALE ANALYSIS]</scope>
    <source>
        <tissue>Cervix carcinoma</tissue>
    </source>
</reference>
<reference key="8">
    <citation type="journal article" date="2009" name="Anal. Chem.">
        <title>Lys-N and trypsin cover complementary parts of the phosphoproteome in a refined SCX-based approach.</title>
        <authorList>
            <person name="Gauci S."/>
            <person name="Helbig A.O."/>
            <person name="Slijper M."/>
            <person name="Krijgsveld J."/>
            <person name="Heck A.J."/>
            <person name="Mohammed S."/>
        </authorList>
    </citation>
    <scope>ACETYLATION [LARGE SCALE ANALYSIS] AT ALA-2</scope>
    <scope>CLEAVAGE OF INITIATOR METHIONINE [LARGE SCALE ANALYSIS]</scope>
    <scope>IDENTIFICATION BY MASS SPECTROMETRY [LARGE SCALE ANALYSIS]</scope>
</reference>
<reference key="9">
    <citation type="journal article" date="2009" name="Mol. Cell. Biol.">
        <title>The double-histone-acetyltransferase complex ATAC is essential for mammalian development.</title>
        <authorList>
            <person name="Guelman S."/>
            <person name="Kozuka K."/>
            <person name="Mao Y."/>
            <person name="Pham V."/>
            <person name="Solloway M.J."/>
            <person name="Wang J."/>
            <person name="Wu J."/>
            <person name="Lill J.R."/>
            <person name="Zha J."/>
        </authorList>
    </citation>
    <scope>FUNCTION</scope>
    <scope>IDENTIFICATION IN ATAC COMPLEX</scope>
</reference>
<reference key="10">
    <citation type="journal article" date="2010" name="Sci. Signal.">
        <title>Quantitative phosphoproteomics reveals widespread full phosphorylation site occupancy during mitosis.</title>
        <authorList>
            <person name="Olsen J.V."/>
            <person name="Vermeulen M."/>
            <person name="Santamaria A."/>
            <person name="Kumar C."/>
            <person name="Miller M.L."/>
            <person name="Jensen L.J."/>
            <person name="Gnad F."/>
            <person name="Cox J."/>
            <person name="Jensen T.S."/>
            <person name="Nigg E.A."/>
            <person name="Brunak S."/>
            <person name="Mann M."/>
        </authorList>
    </citation>
    <scope>IDENTIFICATION BY MASS SPECTROMETRY [LARGE SCALE ANALYSIS]</scope>
    <source>
        <tissue>Cervix carcinoma</tissue>
    </source>
</reference>
<reference key="11">
    <citation type="journal article" date="2011" name="BMC Syst. Biol.">
        <title>Initial characterization of the human central proteome.</title>
        <authorList>
            <person name="Burkard T.R."/>
            <person name="Planyavsky M."/>
            <person name="Kaupe I."/>
            <person name="Breitwieser F.P."/>
            <person name="Buerckstuemmer T."/>
            <person name="Bennett K.L."/>
            <person name="Superti-Furga G."/>
            <person name="Colinge J."/>
        </authorList>
    </citation>
    <scope>IDENTIFICATION BY MASS SPECTROMETRY [LARGE SCALE ANALYSIS]</scope>
</reference>
<reference key="12">
    <citation type="journal article" date="2011" name="Sci. Signal.">
        <title>System-wide temporal characterization of the proteome and phosphoproteome of human embryonic stem cell differentiation.</title>
        <authorList>
            <person name="Rigbolt K.T."/>
            <person name="Prokhorova T.A."/>
            <person name="Akimov V."/>
            <person name="Henningsen J."/>
            <person name="Johansen P.T."/>
            <person name="Kratchmarova I."/>
            <person name="Kassem M."/>
            <person name="Mann M."/>
            <person name="Olsen J.V."/>
            <person name="Blagoev B."/>
        </authorList>
    </citation>
    <scope>IDENTIFICATION BY MASS SPECTROMETRY [LARGE SCALE ANALYSIS]</scope>
</reference>
<reference key="13">
    <citation type="journal article" date="2012" name="Mol. Cell. Proteomics">
        <title>Comparative large-scale characterisation of plant vs. mammal proteins reveals similar and idiosyncratic N-alpha acetylation features.</title>
        <authorList>
            <person name="Bienvenut W.V."/>
            <person name="Sumpton D."/>
            <person name="Martinez A."/>
            <person name="Lilla S."/>
            <person name="Espagne C."/>
            <person name="Meinnel T."/>
            <person name="Giglione C."/>
        </authorList>
    </citation>
    <scope>ACETYLATION [LARGE SCALE ANALYSIS] AT ALA-2</scope>
    <scope>CLEAVAGE OF INITIATOR METHIONINE [LARGE SCALE ANALYSIS]</scope>
    <scope>IDENTIFICATION BY MASS SPECTROMETRY [LARGE SCALE ANALYSIS]</scope>
</reference>
<reference key="14">
    <citation type="journal article" date="2013" name="J. Proteome Res.">
        <title>Toward a comprehensive characterization of a human cancer cell phosphoproteome.</title>
        <authorList>
            <person name="Zhou H."/>
            <person name="Di Palma S."/>
            <person name="Preisinger C."/>
            <person name="Peng M."/>
            <person name="Polat A.N."/>
            <person name="Heck A.J."/>
            <person name="Mohammed S."/>
        </authorList>
    </citation>
    <scope>PHOSPHORYLATION [LARGE SCALE ANALYSIS] AT SER-105 AND SER-106</scope>
    <scope>IDENTIFICATION BY MASS SPECTROMETRY [LARGE SCALE ANALYSIS]</scope>
    <source>
        <tissue>Cervix carcinoma</tissue>
        <tissue>Erythroleukemia</tissue>
    </source>
</reference>
<reference key="15">
    <citation type="journal article" date="2001" name="Cell">
        <title>Crystal structure of negative cofactor 2 recognizing the TBP-DNA transcription complex.</title>
        <authorList>
            <person name="Kamada K."/>
            <person name="Shu F."/>
            <person name="Chen H."/>
            <person name="Malik S."/>
            <person name="Stelzer G."/>
            <person name="Roeder R.G."/>
            <person name="Meisterernst M."/>
            <person name="Burley S.K."/>
        </authorList>
    </citation>
    <scope>X-RAY CRYSTALLOGRAPHY (2.62 ANGSTROMS) IN COMPLEX WITH DRAP1; TBP AND DNA</scope>
</reference>
<gene>
    <name type="primary">DR1</name>
</gene>
<organism>
    <name type="scientific">Homo sapiens</name>
    <name type="common">Human</name>
    <dbReference type="NCBI Taxonomy" id="9606"/>
    <lineage>
        <taxon>Eukaryota</taxon>
        <taxon>Metazoa</taxon>
        <taxon>Chordata</taxon>
        <taxon>Craniata</taxon>
        <taxon>Vertebrata</taxon>
        <taxon>Euteleostomi</taxon>
        <taxon>Mammalia</taxon>
        <taxon>Eutheria</taxon>
        <taxon>Euarchontoglires</taxon>
        <taxon>Primates</taxon>
        <taxon>Haplorrhini</taxon>
        <taxon>Catarrhini</taxon>
        <taxon>Hominidae</taxon>
        <taxon>Homo</taxon>
    </lineage>
</organism>
<feature type="initiator methionine" description="Removed" evidence="9 10">
    <location>
        <position position="1"/>
    </location>
</feature>
<feature type="chain" id="PRO_0000072440" description="Protein Dr1">
    <location>
        <begin position="2"/>
        <end position="176"/>
    </location>
</feature>
<feature type="domain" description="Histone-fold" evidence="1">
    <location>
        <begin position="12"/>
        <end position="75"/>
    </location>
</feature>
<feature type="region of interest" description="Disordered" evidence="2">
    <location>
        <begin position="152"/>
        <end position="176"/>
    </location>
</feature>
<feature type="short sequence motif" description="Nuclear localization signal" evidence="1">
    <location>
        <begin position="100"/>
        <end position="103"/>
    </location>
</feature>
<feature type="compositionally biased region" description="Low complexity" evidence="2">
    <location>
        <begin position="152"/>
        <end position="167"/>
    </location>
</feature>
<feature type="modified residue" description="N-acetylalanine" evidence="9 10">
    <location>
        <position position="2"/>
    </location>
</feature>
<feature type="modified residue" description="Phosphoserine" evidence="11">
    <location>
        <position position="105"/>
    </location>
</feature>
<feature type="modified residue" description="Phosphoserine" evidence="11">
    <location>
        <position position="106"/>
    </location>
</feature>
<feature type="modified residue" description="Phosphoserine" evidence="8">
    <location>
        <position position="166"/>
    </location>
</feature>
<feature type="modified residue" description="Phosphoserine" evidence="8">
    <location>
        <position position="167"/>
    </location>
</feature>
<feature type="sequence variant" id="VAR_034506" description="In dbSNP:rs3088371.">
    <original>E</original>
    <variation>D</variation>
    <location>
        <position position="171"/>
    </location>
</feature>
<feature type="helix" evidence="12">
    <location>
        <begin position="15"/>
        <end position="25"/>
    </location>
</feature>
<feature type="helix" evidence="12">
    <location>
        <begin position="33"/>
        <end position="60"/>
    </location>
</feature>
<feature type="strand" evidence="12">
    <location>
        <begin position="64"/>
        <end position="66"/>
    </location>
</feature>
<feature type="helix" evidence="12">
    <location>
        <begin position="68"/>
        <end position="78"/>
    </location>
</feature>
<feature type="helix" evidence="12">
    <location>
        <begin position="81"/>
        <end position="83"/>
    </location>
</feature>
<feature type="helix" evidence="12">
    <location>
        <begin position="84"/>
        <end position="110"/>
    </location>
</feature>
<feature type="strand" evidence="12">
    <location>
        <begin position="111"/>
        <end position="113"/>
    </location>
</feature>
<feature type="helix" evidence="12">
    <location>
        <begin position="115"/>
        <end position="140"/>
    </location>
</feature>
<protein>
    <recommendedName>
        <fullName>Protein Dr1</fullName>
    </recommendedName>
    <alternativeName>
        <fullName>Down-regulator of transcription 1</fullName>
    </alternativeName>
    <alternativeName>
        <fullName>Negative cofactor 2-beta</fullName>
        <shortName>NC2-beta</shortName>
    </alternativeName>
    <alternativeName>
        <fullName>TATA-binding protein-associated phosphoprotein</fullName>
    </alternativeName>
</protein>
<keyword id="KW-0002">3D-structure</keyword>
<keyword id="KW-0007">Acetylation</keyword>
<keyword id="KW-0903">Direct protein sequencing</keyword>
<keyword id="KW-0238">DNA-binding</keyword>
<keyword id="KW-0539">Nucleus</keyword>
<keyword id="KW-0597">Phosphoprotein</keyword>
<keyword id="KW-1267">Proteomics identification</keyword>
<keyword id="KW-1185">Reference proteome</keyword>
<keyword id="KW-0678">Repressor</keyword>
<keyword id="KW-0804">Transcription</keyword>
<keyword id="KW-0805">Transcription regulation</keyword>
<sequence length="176" mass="19444">MASSSGNDDDLTIPRAAINKMIKETLPNVRVANDARELVVNCCTEFIHLISSEANEICNKSEKKTISPEHVIQALESLGFGSYISEVKEVLQECKTVALKRRKASSRLENLGIPEEELLRQQQELFAKARQQQAELAQQEWLQMQQAAQQAQLAAASASASNQAGSSQDEEDDDDI</sequence>
<accession>Q01658</accession>
<comment type="function">
    <text evidence="4 5">The association of the DR1/DRAP1 heterodimer with TBP results in a functional repression of both activated and basal transcription of class II genes. This interaction precludes the formation of a transcription-competent complex by inhibiting the association of TFIIA and/or TFIIB with TBP. Can bind to DNA on its own. Component of the ATAC complex, a complex with histone acetyltransferase activity on histones H3 and H4.</text>
</comment>
<comment type="subunit">
    <text evidence="3 4 5 6">Heterodimer with DRAP1. DR1 exists in solution as a homotetramer that dissociates during interaction with TBP and then, after complexing with TBP, reassociates at a slow rate, to reconstitute the tetramer. Interacts with NFIL3. Component of the ADA2A-containing complex (ATAC), composed of KAT14, KAT2A, TADA2L, TADA3L, ZZ3, MBIP, WDR5, YEATS2, CCDC101 and DR1.</text>
</comment>
<comment type="interaction">
    <interactant intactId="EBI-750300">
        <id>Q01658</id>
    </interactant>
    <interactant intactId="EBI-2556915">
        <id>P13928</id>
        <label>ANXA8</label>
    </interactant>
    <organismsDiffer>false</organismsDiffer>
    <experiments>3</experiments>
</comment>
<comment type="interaction">
    <interactant intactId="EBI-750300">
        <id>Q01658</id>
    </interactant>
    <interactant intactId="EBI-77613">
        <id>P05067</id>
        <label>APP</label>
    </interactant>
    <organismsDiffer>false</organismsDiffer>
    <experiments>3</experiments>
</comment>
<comment type="interaction">
    <interactant intactId="EBI-750300">
        <id>Q01658</id>
    </interactant>
    <interactant intactId="EBI-10254793">
        <id>Q6XD76</id>
        <label>ASCL4</label>
    </interactant>
    <organismsDiffer>false</organismsDiffer>
    <experiments>3</experiments>
</comment>
<comment type="interaction">
    <interactant intactId="EBI-750300">
        <id>Q01658</id>
    </interactant>
    <interactant intactId="EBI-10693257">
        <id>Q9H7T9</id>
        <label>AUNIP</label>
    </interactant>
    <organismsDiffer>false</organismsDiffer>
    <experiments>3</experiments>
</comment>
<comment type="interaction">
    <interactant intactId="EBI-750300">
        <id>Q01658</id>
    </interactant>
    <interactant intactId="EBI-10988864">
        <id>P46379-2</id>
        <label>BAG6</label>
    </interactant>
    <organismsDiffer>false</organismsDiffer>
    <experiments>3</experiments>
</comment>
<comment type="interaction">
    <interactant intactId="EBI-750300">
        <id>Q01658</id>
    </interactant>
    <interactant intactId="EBI-742750">
        <id>Q8TBE0</id>
        <label>BAHD1</label>
    </interactant>
    <organismsDiffer>false</organismsDiffer>
    <experiments>3</experiments>
</comment>
<comment type="interaction">
    <interactant intactId="EBI-750300">
        <id>Q01658</id>
    </interactant>
    <interactant intactId="EBI-11524174">
        <id>Q9H972-2</id>
        <label>C14orf93</label>
    </interactant>
    <organismsDiffer>false</organismsDiffer>
    <experiments>3</experiments>
</comment>
<comment type="interaction">
    <interactant intactId="EBI-750300">
        <id>Q01658</id>
    </interactant>
    <interactant intactId="EBI-751596">
        <id>Q96LL4</id>
        <label>C8orf48</label>
    </interactant>
    <organismsDiffer>false</organismsDiffer>
    <experiments>3</experiments>
</comment>
<comment type="interaction">
    <interactant intactId="EBI-750300">
        <id>Q01658</id>
    </interactant>
    <interactant intactId="EBI-744027">
        <id>Q13191</id>
        <label>CBLB</label>
    </interactant>
    <organismsDiffer>false</organismsDiffer>
    <experiments>3</experiments>
</comment>
<comment type="interaction">
    <interactant intactId="EBI-750300">
        <id>Q01658</id>
    </interactant>
    <interactant intactId="EBI-11953200">
        <id>Q494V2-2</id>
        <label>CFAP100</label>
    </interactant>
    <organismsDiffer>false</organismsDiffer>
    <experiments>3</experiments>
</comment>
<comment type="interaction">
    <interactant intactId="EBI-750300">
        <id>Q01658</id>
    </interactant>
    <interactant intactId="EBI-9087876">
        <id>P48730-2</id>
        <label>CSNK1D</label>
    </interactant>
    <organismsDiffer>false</organismsDiffer>
    <experiments>3</experiments>
</comment>
<comment type="interaction">
    <interactant intactId="EBI-750300">
        <id>Q01658</id>
    </interactant>
    <interactant intactId="EBI-25842815">
        <id>Q5TAQ9-2</id>
        <label>DCAF8</label>
    </interactant>
    <organismsDiffer>false</organismsDiffer>
    <experiments>3</experiments>
</comment>
<comment type="interaction">
    <interactant intactId="EBI-750300">
        <id>Q01658</id>
    </interactant>
    <interactant intactId="EBI-23669343">
        <id>Q92782-2</id>
        <label>DPF1</label>
    </interactant>
    <organismsDiffer>false</organismsDiffer>
    <experiments>3</experiments>
</comment>
<comment type="interaction">
    <interactant intactId="EBI-750300">
        <id>Q01658</id>
    </interactant>
    <interactant intactId="EBI-21529239">
        <id>Q86TI2-2</id>
        <label>DPP9</label>
    </interactant>
    <organismsDiffer>false</organismsDiffer>
    <experiments>3</experiments>
</comment>
<comment type="interaction">
    <interactant intactId="EBI-750300">
        <id>Q01658</id>
    </interactant>
    <interactant intactId="EBI-712941">
        <id>Q14919</id>
        <label>DRAP1</label>
    </interactant>
    <organismsDiffer>false</organismsDiffer>
    <experiments>49</experiments>
</comment>
<comment type="interaction">
    <interactant intactId="EBI-750300">
        <id>Q01658</id>
    </interactant>
    <interactant intactId="EBI-11748557">
        <id>Q9Y6C2-2</id>
        <label>EMILIN1</label>
    </interactant>
    <organismsDiffer>false</organismsDiffer>
    <experiments>3</experiments>
</comment>
<comment type="interaction">
    <interactant intactId="EBI-750300">
        <id>Q01658</id>
    </interactant>
    <interactant intactId="EBI-3893327">
        <id>Q6P1L5</id>
        <label>FAM117B</label>
    </interactant>
    <organismsDiffer>false</organismsDiffer>
    <experiments>3</experiments>
</comment>
<comment type="interaction">
    <interactant intactId="EBI-750300">
        <id>Q01658</id>
    </interactant>
    <interactant intactId="EBI-5461838">
        <id>Q17RN3</id>
        <label>FAM98C</label>
    </interactant>
    <organismsDiffer>false</organismsDiffer>
    <experiments>3</experiments>
</comment>
<comment type="interaction">
    <interactant intactId="EBI-750300">
        <id>Q01658</id>
    </interactant>
    <interactant intactId="EBI-8468186">
        <id>Q8IZU1</id>
        <label>FAM9A</label>
    </interactant>
    <organismsDiffer>false</organismsDiffer>
    <experiments>3</experiments>
</comment>
<comment type="interaction">
    <interactant intactId="EBI-750300">
        <id>Q01658</id>
    </interactant>
    <interactant intactId="EBI-750953">
        <id>Q96IJ6</id>
        <label>GMPPA</label>
    </interactant>
    <organismsDiffer>false</organismsDiffer>
    <experiments>3</experiments>
</comment>
<comment type="interaction">
    <interactant intactId="EBI-750300">
        <id>Q01658</id>
    </interactant>
    <interactant intactId="EBI-22000587">
        <id>Q9HBQ8</id>
        <label>GOLGA2P5</label>
    </interactant>
    <organismsDiffer>false</organismsDiffer>
    <experiments>3</experiments>
</comment>
<comment type="interaction">
    <interactant intactId="EBI-750300">
        <id>Q01658</id>
    </interactant>
    <interactant intactId="EBI-347538">
        <id>Q9Y4H4</id>
        <label>GPSM3</label>
    </interactant>
    <organismsDiffer>false</organismsDiffer>
    <experiments>3</experiments>
</comment>
<comment type="interaction">
    <interactant intactId="EBI-750300">
        <id>Q01658</id>
    </interactant>
    <interactant intactId="EBI-2868501">
        <id>Q6NXT2</id>
        <label>H3-5</label>
    </interactant>
    <organismsDiffer>false</organismsDiffer>
    <experiments>3</experiments>
</comment>
<comment type="interaction">
    <interactant intactId="EBI-750300">
        <id>Q01658</id>
    </interactant>
    <interactant intactId="EBI-2680288">
        <id>Q9HCC6</id>
        <label>HES4</label>
    </interactant>
    <organismsDiffer>false</organismsDiffer>
    <experiments>3</experiments>
</comment>
<comment type="interaction">
    <interactant intactId="EBI-750300">
        <id>Q01658</id>
    </interactant>
    <interactant intactId="EBI-713456">
        <id>Q13123</id>
        <label>IK</label>
    </interactant>
    <organismsDiffer>false</organismsDiffer>
    <experiments>3</experiments>
</comment>
<comment type="interaction">
    <interactant intactId="EBI-750300">
        <id>Q01658</id>
    </interactant>
    <interactant intactId="EBI-10278909">
        <id>Q92613</id>
        <label>JADE3</label>
    </interactant>
    <organismsDiffer>false</organismsDiffer>
    <experiments>3</experiments>
</comment>
<comment type="interaction">
    <interactant intactId="EBI-750300">
        <id>Q01658</id>
    </interactant>
    <interactant intactId="EBI-2796400">
        <id>Q9UIH9</id>
        <label>KLF15</label>
    </interactant>
    <organismsDiffer>false</organismsDiffer>
    <experiments>3</experiments>
</comment>
<comment type="interaction">
    <interactant intactId="EBI-750300">
        <id>Q01658</id>
    </interactant>
    <interactant intactId="EBI-1052558">
        <id>Q92615</id>
        <label>LARP4B</label>
    </interactant>
    <organismsDiffer>false</organismsDiffer>
    <experiments>3</experiments>
</comment>
<comment type="interaction">
    <interactant intactId="EBI-750300">
        <id>Q01658</id>
    </interactant>
    <interactant intactId="EBI-9088215">
        <id>A2RU56</id>
        <label>LOC401296</label>
    </interactant>
    <organismsDiffer>false</organismsDiffer>
    <experiments>3</experiments>
</comment>
<comment type="interaction">
    <interactant intactId="EBI-750300">
        <id>Q01658</id>
    </interactant>
    <interactant intactId="EBI-5278370">
        <id>Q14693</id>
        <label>LPIN1</label>
    </interactant>
    <organismsDiffer>false</organismsDiffer>
    <experiments>3</experiments>
</comment>
<comment type="interaction">
    <interactant intactId="EBI-750300">
        <id>Q01658</id>
    </interactant>
    <interactant intactId="EBI-10694180">
        <id>Q8TD91-2</id>
        <label>MAGEC3</label>
    </interactant>
    <organismsDiffer>false</organismsDiffer>
    <experiments>3</experiments>
</comment>
<comment type="interaction">
    <interactant intactId="EBI-750300">
        <id>Q01658</id>
    </interactant>
    <interactant intactId="EBI-2341005">
        <id>Q9H000</id>
        <label>MKRN2</label>
    </interactant>
    <organismsDiffer>false</organismsDiffer>
    <experiments>3</experiments>
</comment>
<comment type="interaction">
    <interactant intactId="EBI-750300">
        <id>Q01658</id>
    </interactant>
    <interactant intactId="EBI-8475277">
        <id>Q15049</id>
        <label>MLC1</label>
    </interactant>
    <organismsDiffer>false</organismsDiffer>
    <experiments>3</experiments>
</comment>
<comment type="interaction">
    <interactant intactId="EBI-750300">
        <id>Q01658</id>
    </interactant>
    <interactant intactId="EBI-719403">
        <id>O95563</id>
        <label>MPC2</label>
    </interactant>
    <organismsDiffer>false</organismsDiffer>
    <experiments>3</experiments>
</comment>
<comment type="interaction">
    <interactant intactId="EBI-750300">
        <id>Q01658</id>
    </interactant>
    <interactant intactId="EBI-447544">
        <id>P01106</id>
        <label>MYC</label>
    </interactant>
    <organismsDiffer>false</organismsDiffer>
    <experiments>3</experiments>
</comment>
<comment type="interaction">
    <interactant intactId="EBI-750300">
        <id>Q01658</id>
    </interactant>
    <interactant intactId="EBI-11956831">
        <id>Q13952-2</id>
        <label>NFYC</label>
    </interactant>
    <organismsDiffer>false</organismsDiffer>
    <experiments>3</experiments>
</comment>
<comment type="interaction">
    <interactant intactId="EBI-750300">
        <id>Q01658</id>
    </interactant>
    <interactant intactId="EBI-18577082">
        <id>O15381-5</id>
        <label>NVL</label>
    </interactant>
    <organismsDiffer>false</organismsDiffer>
    <experiments>3</experiments>
</comment>
<comment type="interaction">
    <interactant intactId="EBI-750300">
        <id>Q01658</id>
    </interactant>
    <interactant intactId="EBI-10302990">
        <id>Q9BYU1</id>
        <label>PBX4</label>
    </interactant>
    <organismsDiffer>false</organismsDiffer>
    <experiments>3</experiments>
</comment>
<comment type="interaction">
    <interactant intactId="EBI-750300">
        <id>Q01658</id>
    </interactant>
    <interactant intactId="EBI-2339674">
        <id>Q5T6S3</id>
        <label>PHF19</label>
    </interactant>
    <organismsDiffer>false</organismsDiffer>
    <experiments>3</experiments>
</comment>
<comment type="interaction">
    <interactant intactId="EBI-750300">
        <id>Q01658</id>
    </interactant>
    <interactant intactId="EBI-744901">
        <id>Q9NRF9</id>
        <label>POLE3</label>
    </interactant>
    <organismsDiffer>false</organismsDiffer>
    <experiments>7</experiments>
</comment>
<comment type="interaction">
    <interactant intactId="EBI-750300">
        <id>Q01658</id>
    </interactant>
    <interactant intactId="EBI-395189">
        <id>P19388</id>
        <label>POLR2E</label>
    </interactant>
    <organismsDiffer>false</organismsDiffer>
    <experiments>3</experiments>
</comment>
<comment type="interaction">
    <interactant intactId="EBI-750300">
        <id>Q01658</id>
    </interactant>
    <interactant intactId="EBI-16399024">
        <id>Q99873-2</id>
        <label>PRMT1</label>
    </interactant>
    <organismsDiffer>false</organismsDiffer>
    <experiments>3</experiments>
</comment>
<comment type="interaction">
    <interactant intactId="EBI-750300">
        <id>Q01658</id>
    </interactant>
    <interactant intactId="EBI-746228">
        <id>Q9Y5P3</id>
        <label>RAI2</label>
    </interactant>
    <organismsDiffer>false</organismsDiffer>
    <experiments>3</experiments>
</comment>
<comment type="interaction">
    <interactant intactId="EBI-750300">
        <id>Q01658</id>
    </interactant>
    <interactant intactId="EBI-743938">
        <id>Q96D59</id>
        <label>RNF183</label>
    </interactant>
    <organismsDiffer>false</organismsDiffer>
    <experiments>3</experiments>
</comment>
<comment type="interaction">
    <interactant intactId="EBI-750300">
        <id>Q01658</id>
    </interactant>
    <interactant intactId="EBI-2340642">
        <id>Q969K3</id>
        <label>RNF34</label>
    </interactant>
    <organismsDiffer>false</organismsDiffer>
    <experiments>3</experiments>
</comment>
<comment type="interaction">
    <interactant intactId="EBI-750300">
        <id>Q01658</id>
    </interactant>
    <interactant intactId="EBI-366570">
        <id>Q9BUL9</id>
        <label>RPP25</label>
    </interactant>
    <organismsDiffer>false</organismsDiffer>
    <experiments>3</experiments>
</comment>
<comment type="interaction">
    <interactant intactId="EBI-750300">
        <id>Q01658</id>
    </interactant>
    <interactant intactId="EBI-354303">
        <id>P62701</id>
        <label>RPS4X</label>
    </interactant>
    <organismsDiffer>false</organismsDiffer>
    <experiments>3</experiments>
</comment>
<comment type="interaction">
    <interactant intactId="EBI-750300">
        <id>Q01658</id>
    </interactant>
    <interactant intactId="EBI-6257312">
        <id>Q9BVN2</id>
        <label>RUSC1</label>
    </interactant>
    <organismsDiffer>false</organismsDiffer>
    <experiments>3</experiments>
</comment>
<comment type="interaction">
    <interactant intactId="EBI-750300">
        <id>Q01658</id>
    </interactant>
    <interactant intactId="EBI-752324">
        <id>Q8N488</id>
        <label>RYBP</label>
    </interactant>
    <organismsDiffer>false</organismsDiffer>
    <experiments>3</experiments>
</comment>
<comment type="interaction">
    <interactant intactId="EBI-750300">
        <id>Q01658</id>
    </interactant>
    <interactant intactId="EBI-632609">
        <id>O75446</id>
        <label>SAP30</label>
    </interactant>
    <organismsDiffer>false</organismsDiffer>
    <experiments>3</experiments>
</comment>
<comment type="interaction">
    <interactant intactId="EBI-750300">
        <id>Q01658</id>
    </interactant>
    <interactant intactId="EBI-79819">
        <id>P60896</id>
        <label>SEM1</label>
    </interactant>
    <organismsDiffer>false</organismsDiffer>
    <experiments>3</experiments>
</comment>
<comment type="interaction">
    <interactant intactId="EBI-750300">
        <id>Q01658</id>
    </interactant>
    <interactant intactId="EBI-7067260">
        <id>Q8NHS9</id>
        <label>SPATA22</label>
    </interactant>
    <organismsDiffer>false</organismsDiffer>
    <experiments>3</experiments>
</comment>
<comment type="interaction">
    <interactant intactId="EBI-750300">
        <id>Q01658</id>
    </interactant>
    <interactant intactId="EBI-751020">
        <id>Q9P2T0</id>
        <label>SPMAP2</label>
    </interactant>
    <organismsDiffer>false</organismsDiffer>
    <experiments>3</experiments>
</comment>
<comment type="interaction">
    <interactant intactId="EBI-750300">
        <id>Q01658</id>
    </interactant>
    <interactant intactId="EBI-8345366">
        <id>Q8TCT7-2</id>
        <label>SPPL2B</label>
    </interactant>
    <organismsDiffer>false</organismsDiffer>
    <experiments>3</experiments>
</comment>
<comment type="interaction">
    <interactant intactId="EBI-750300">
        <id>Q01658</id>
    </interactant>
    <interactant intactId="EBI-717245">
        <id>Q9NRL3</id>
        <label>STRN4</label>
    </interactant>
    <organismsDiffer>false</organismsDiffer>
    <experiments>3</experiments>
</comment>
<comment type="interaction">
    <interactant intactId="EBI-750300">
        <id>Q01658</id>
    </interactant>
    <interactant intactId="EBI-11123832">
        <id>O60506-4</id>
        <label>SYNCRIP</label>
    </interactant>
    <organismsDiffer>false</organismsDiffer>
    <experiments>3</experiments>
</comment>
<comment type="interaction">
    <interactant intactId="EBI-750300">
        <id>Q01658</id>
    </interactant>
    <interactant intactId="EBI-747797">
        <id>Q9BSH4</id>
        <label>TACO1</label>
    </interactant>
    <organismsDiffer>false</organismsDiffer>
    <experiments>3</experiments>
</comment>
<comment type="interaction">
    <interactant intactId="EBI-750300">
        <id>Q01658</id>
    </interactant>
    <interactant intactId="EBI-10239991">
        <id>Q32MN6</id>
        <label>TBP</label>
    </interactant>
    <organismsDiffer>false</organismsDiffer>
    <experiments>3</experiments>
</comment>
<comment type="interaction">
    <interactant intactId="EBI-750300">
        <id>Q01658</id>
    </interactant>
    <interactant intactId="EBI-861737">
        <id>O43615</id>
        <label>TIMM44</label>
    </interactant>
    <organismsDiffer>false</organismsDiffer>
    <experiments>3</experiments>
</comment>
<comment type="interaction">
    <interactant intactId="EBI-750300">
        <id>Q01658</id>
    </interactant>
    <interactant intactId="EBI-10696113">
        <id>O75604-3</id>
        <label>USP2</label>
    </interactant>
    <organismsDiffer>false</organismsDiffer>
    <experiments>3</experiments>
</comment>
<comment type="interaction">
    <interactant intactId="EBI-750300">
        <id>Q01658</id>
    </interactant>
    <interactant intactId="EBI-12157263">
        <id>P40337-2</id>
        <label>VHL</label>
    </interactant>
    <organismsDiffer>false</organismsDiffer>
    <experiments>3</experiments>
</comment>
<comment type="interaction">
    <interactant intactId="EBI-750300">
        <id>Q01658</id>
    </interactant>
    <interactant intactId="EBI-6427899">
        <id>P58304</id>
        <label>VSX2</label>
    </interactant>
    <organismsDiffer>false</organismsDiffer>
    <experiments>3</experiments>
</comment>
<comment type="interaction">
    <interactant intactId="EBI-750300">
        <id>Q01658</id>
    </interactant>
    <interactant intactId="EBI-14104088">
        <id>Q53FD0-2</id>
        <label>ZC2HC1C</label>
    </interactant>
    <organismsDiffer>false</organismsDiffer>
    <experiments>3</experiments>
</comment>
<comment type="interaction">
    <interactant intactId="EBI-750300">
        <id>Q01658</id>
    </interactant>
    <interactant intactId="EBI-3937106">
        <id>Q9P2Y4</id>
        <label>ZNF219</label>
    </interactant>
    <organismsDiffer>false</organismsDiffer>
    <experiments>3</experiments>
</comment>
<comment type="interaction">
    <interactant intactId="EBI-750300">
        <id>Q01658</id>
    </interactant>
    <interactant intactId="EBI-25831733">
        <id>Q96MN9-2</id>
        <label>ZNF488</label>
    </interactant>
    <organismsDiffer>false</organismsDiffer>
    <experiments>3</experiments>
</comment>
<comment type="interaction">
    <interactant intactId="EBI-750300">
        <id>Q01658</id>
    </interactant>
    <interactant intactId="EBI-745520">
        <id>Q9P0T4</id>
        <label>ZNF581</label>
    </interactant>
    <organismsDiffer>false</organismsDiffer>
    <experiments>3</experiments>
</comment>
<comment type="interaction">
    <interactant intactId="EBI-750300">
        <id>Q01658</id>
    </interactant>
    <interactant intactId="EBI-18036029">
        <id>Q3KNS6-3</id>
        <label>ZNF829</label>
    </interactant>
    <organismsDiffer>false</organismsDiffer>
    <experiments>3</experiments>
</comment>
<comment type="interaction">
    <interactant intactId="EBI-750300">
        <id>Q01658</id>
    </interactant>
    <interactant intactId="EBI-12021938">
        <id>Q8NBB4-2</id>
        <label>ZSCAN1</label>
    </interactant>
    <organismsDiffer>false</organismsDiffer>
    <experiments>3</experiments>
</comment>
<comment type="interaction">
    <interactant intactId="EBI-750300">
        <id>Q01658</id>
    </interactant>
    <interactant intactId="EBI-10178224">
        <id>P10073</id>
        <label>ZSCAN22</label>
    </interactant>
    <organismsDiffer>false</organismsDiffer>
    <experiments>3</experiments>
</comment>
<comment type="interaction">
    <interactant intactId="EBI-750300">
        <id>Q01658</id>
    </interactant>
    <interactant intactId="EBI-10211777">
        <id>A0A384ME25</id>
    </interactant>
    <organismsDiffer>false</organismsDiffer>
    <experiments>3</experiments>
</comment>
<comment type="interaction">
    <interactant intactId="EBI-750300">
        <id>Q01658</id>
    </interactant>
    <interactant intactId="EBI-10307430">
        <id>Q9H669</id>
    </interactant>
    <organismsDiffer>false</organismsDiffer>
    <experiments>3</experiments>
</comment>
<comment type="subcellular location">
    <subcellularLocation>
        <location>Nucleus</location>
    </subcellularLocation>
</comment>
<comment type="PTM">
    <text>Phosphorylation regulates its interaction with TBP. Not phosphorylated when bound to DRAP1.</text>
</comment>
<comment type="similarity">
    <text evidence="7">Belongs to the NC2 beta/DR1 family.</text>
</comment>